<gene>
    <name evidence="1" type="primary">flgI</name>
    <name type="ordered locus">BAV1695</name>
</gene>
<accession>Q2L1B1</accession>
<feature type="signal peptide" evidence="1">
    <location>
        <begin position="1"/>
        <end position="29"/>
    </location>
</feature>
<feature type="chain" id="PRO_0000236296" description="Flagellar P-ring protein">
    <location>
        <begin position="30"/>
        <end position="376"/>
    </location>
</feature>
<comment type="function">
    <text evidence="1">Assembles around the rod to form the L-ring and probably protects the motor/basal body from shearing forces during rotation.</text>
</comment>
<comment type="subunit">
    <text evidence="1">The basal body constitutes a major portion of the flagellar organelle and consists of four rings (L,P,S, and M) mounted on a central rod.</text>
</comment>
<comment type="subcellular location">
    <subcellularLocation>
        <location evidence="1">Periplasm</location>
    </subcellularLocation>
    <subcellularLocation>
        <location evidence="1">Bacterial flagellum basal body</location>
    </subcellularLocation>
</comment>
<comment type="similarity">
    <text evidence="1">Belongs to the FlgI family.</text>
</comment>
<sequence>MTQRPFSLLSHLGRICLAAAMLAALPAQAAERLKDLATFQGVRGNQLIGYGLVVGLDGTGDQVRQTPFTQQSLTNMLSQLGITVPAGSNMQLKNVAAVMVTATLPAFARPGQTVDVVVSSMGNAKSLRGGTLLMTPLKGADNSVYAIAQGNVLVGGAGASAGGSSVQINTLNGGRISAGAIVERPVPTSFAQDGLVYLEMNNSDFGTTQNAANAINRQFGAGTAMVMDARVLQLRGPLDPSQMPAFLSQIENLPVTLAPAVAKVIINARTGSVVMNRTVTIEEAAVAHGNLSVIINRQNQVFQPDTPFTDGQTVVAPNTQIEVRQEGGALQRVRTSANLADVVKALNALGATPQDLLAILQAMKAAGALRAELEII</sequence>
<protein>
    <recommendedName>
        <fullName evidence="1">Flagellar P-ring protein</fullName>
    </recommendedName>
    <alternativeName>
        <fullName evidence="1">Basal body P-ring protein</fullName>
    </alternativeName>
</protein>
<name>FLGI_BORA1</name>
<proteinExistence type="inferred from homology"/>
<organism>
    <name type="scientific">Bordetella avium (strain 197N)</name>
    <dbReference type="NCBI Taxonomy" id="360910"/>
    <lineage>
        <taxon>Bacteria</taxon>
        <taxon>Pseudomonadati</taxon>
        <taxon>Pseudomonadota</taxon>
        <taxon>Betaproteobacteria</taxon>
        <taxon>Burkholderiales</taxon>
        <taxon>Alcaligenaceae</taxon>
        <taxon>Bordetella</taxon>
    </lineage>
</organism>
<dbReference type="EMBL" id="AM167904">
    <property type="protein sequence ID" value="CAJ49303.1"/>
    <property type="molecule type" value="Genomic_DNA"/>
</dbReference>
<dbReference type="RefSeq" id="WP_012417364.1">
    <property type="nucleotide sequence ID" value="NC_010645.1"/>
</dbReference>
<dbReference type="SMR" id="Q2L1B1"/>
<dbReference type="STRING" id="360910.BAV1695"/>
<dbReference type="GeneID" id="92935244"/>
<dbReference type="KEGG" id="bav:BAV1695"/>
<dbReference type="eggNOG" id="COG1706">
    <property type="taxonomic scope" value="Bacteria"/>
</dbReference>
<dbReference type="HOGENOM" id="CLU_045235_1_0_4"/>
<dbReference type="OrthoDB" id="9786431at2"/>
<dbReference type="Proteomes" id="UP000001977">
    <property type="component" value="Chromosome"/>
</dbReference>
<dbReference type="GO" id="GO:0009428">
    <property type="term" value="C:bacterial-type flagellum basal body, distal rod, P ring"/>
    <property type="evidence" value="ECO:0007669"/>
    <property type="project" value="InterPro"/>
</dbReference>
<dbReference type="GO" id="GO:0030288">
    <property type="term" value="C:outer membrane-bounded periplasmic space"/>
    <property type="evidence" value="ECO:0007669"/>
    <property type="project" value="InterPro"/>
</dbReference>
<dbReference type="GO" id="GO:0005198">
    <property type="term" value="F:structural molecule activity"/>
    <property type="evidence" value="ECO:0007669"/>
    <property type="project" value="InterPro"/>
</dbReference>
<dbReference type="GO" id="GO:0071973">
    <property type="term" value="P:bacterial-type flagellum-dependent cell motility"/>
    <property type="evidence" value="ECO:0007669"/>
    <property type="project" value="InterPro"/>
</dbReference>
<dbReference type="HAMAP" id="MF_00416">
    <property type="entry name" value="FlgI"/>
    <property type="match status" value="1"/>
</dbReference>
<dbReference type="InterPro" id="IPR001782">
    <property type="entry name" value="Flag_FlgI"/>
</dbReference>
<dbReference type="NCBIfam" id="NF003676">
    <property type="entry name" value="PRK05303.1"/>
    <property type="match status" value="1"/>
</dbReference>
<dbReference type="PANTHER" id="PTHR30381">
    <property type="entry name" value="FLAGELLAR P-RING PERIPLASMIC PROTEIN FLGI"/>
    <property type="match status" value="1"/>
</dbReference>
<dbReference type="PANTHER" id="PTHR30381:SF0">
    <property type="entry name" value="FLAGELLAR P-RING PROTEIN"/>
    <property type="match status" value="1"/>
</dbReference>
<dbReference type="Pfam" id="PF02119">
    <property type="entry name" value="FlgI"/>
    <property type="match status" value="1"/>
</dbReference>
<dbReference type="PRINTS" id="PR01010">
    <property type="entry name" value="FLGPRINGFLGI"/>
</dbReference>
<evidence type="ECO:0000255" key="1">
    <source>
        <dbReference type="HAMAP-Rule" id="MF_00416"/>
    </source>
</evidence>
<keyword id="KW-0975">Bacterial flagellum</keyword>
<keyword id="KW-0574">Periplasm</keyword>
<keyword id="KW-1185">Reference proteome</keyword>
<keyword id="KW-0732">Signal</keyword>
<reference key="1">
    <citation type="journal article" date="2006" name="J. Bacteriol.">
        <title>Comparison of the genome sequence of the poultry pathogen Bordetella avium with those of B. bronchiseptica, B. pertussis, and B. parapertussis reveals extensive diversity in surface structures associated with host interaction.</title>
        <authorList>
            <person name="Sebaihia M."/>
            <person name="Preston A."/>
            <person name="Maskell D.J."/>
            <person name="Kuzmiak H."/>
            <person name="Connell T.D."/>
            <person name="King N.D."/>
            <person name="Orndorff P.E."/>
            <person name="Miyamoto D.M."/>
            <person name="Thomson N.R."/>
            <person name="Harris D."/>
            <person name="Goble A."/>
            <person name="Lord A."/>
            <person name="Murphy L."/>
            <person name="Quail M.A."/>
            <person name="Rutter S."/>
            <person name="Squares R."/>
            <person name="Squares S."/>
            <person name="Woodward J."/>
            <person name="Parkhill J."/>
            <person name="Temple L.M."/>
        </authorList>
    </citation>
    <scope>NUCLEOTIDE SEQUENCE [LARGE SCALE GENOMIC DNA]</scope>
    <source>
        <strain>197N</strain>
    </source>
</reference>